<accession>Q5ZUS2</accession>
<feature type="chain" id="PRO_0000192742" description="Bifunctional uridylyltransferase/uridylyl-removing enzyme">
    <location>
        <begin position="1"/>
        <end position="861"/>
    </location>
</feature>
<feature type="domain" description="HD" evidence="2">
    <location>
        <begin position="440"/>
        <end position="562"/>
    </location>
</feature>
<feature type="domain" description="ACT 1" evidence="1">
    <location>
        <begin position="679"/>
        <end position="760"/>
    </location>
</feature>
<feature type="domain" description="ACT 2" evidence="1">
    <location>
        <begin position="788"/>
        <end position="861"/>
    </location>
</feature>
<feature type="region of interest" description="Uridylyltransferase">
    <location>
        <begin position="1"/>
        <end position="321"/>
    </location>
</feature>
<feature type="region of interest" description="Uridylyl-removing">
    <location>
        <begin position="322"/>
        <end position="678"/>
    </location>
</feature>
<proteinExistence type="inferred from homology"/>
<name>GLND_LEGPH</name>
<gene>
    <name evidence="1" type="primary">glnD</name>
    <name type="ordered locus">lpg1720</name>
</gene>
<reference key="1">
    <citation type="journal article" date="2004" name="Science">
        <title>The genomic sequence of the accidental pathogen Legionella pneumophila.</title>
        <authorList>
            <person name="Chien M."/>
            <person name="Morozova I."/>
            <person name="Shi S."/>
            <person name="Sheng H."/>
            <person name="Chen J."/>
            <person name="Gomez S.M."/>
            <person name="Asamani G."/>
            <person name="Hill K."/>
            <person name="Nuara J."/>
            <person name="Feder M."/>
            <person name="Rineer J."/>
            <person name="Greenberg J.J."/>
            <person name="Steshenko V."/>
            <person name="Park S.H."/>
            <person name="Zhao B."/>
            <person name="Teplitskaya E."/>
            <person name="Edwards J.R."/>
            <person name="Pampou S."/>
            <person name="Georghiou A."/>
            <person name="Chou I.-C."/>
            <person name="Iannuccilli W."/>
            <person name="Ulz M.E."/>
            <person name="Kim D.H."/>
            <person name="Geringer-Sameth A."/>
            <person name="Goldsberry C."/>
            <person name="Morozov P."/>
            <person name="Fischer S.G."/>
            <person name="Segal G."/>
            <person name="Qu X."/>
            <person name="Rzhetsky A."/>
            <person name="Zhang P."/>
            <person name="Cayanis E."/>
            <person name="De Jong P.J."/>
            <person name="Ju J."/>
            <person name="Kalachikov S."/>
            <person name="Shuman H.A."/>
            <person name="Russo J.J."/>
        </authorList>
    </citation>
    <scope>NUCLEOTIDE SEQUENCE [LARGE SCALE GENOMIC DNA]</scope>
    <source>
        <strain>Philadelphia 1 / ATCC 33152 / DSM 7513</strain>
    </source>
</reference>
<keyword id="KW-0378">Hydrolase</keyword>
<keyword id="KW-0460">Magnesium</keyword>
<keyword id="KW-0511">Multifunctional enzyme</keyword>
<keyword id="KW-0548">Nucleotidyltransferase</keyword>
<keyword id="KW-1185">Reference proteome</keyword>
<keyword id="KW-0677">Repeat</keyword>
<keyword id="KW-0808">Transferase</keyword>
<evidence type="ECO:0000255" key="1">
    <source>
        <dbReference type="HAMAP-Rule" id="MF_00277"/>
    </source>
</evidence>
<evidence type="ECO:0000255" key="2">
    <source>
        <dbReference type="PROSITE-ProRule" id="PRU01175"/>
    </source>
</evidence>
<dbReference type="EC" id="2.7.7.59" evidence="1"/>
<dbReference type="EC" id="3.1.4.-" evidence="1"/>
<dbReference type="EMBL" id="AE017354">
    <property type="protein sequence ID" value="AAU27800.1"/>
    <property type="molecule type" value="Genomic_DNA"/>
</dbReference>
<dbReference type="RefSeq" id="WP_010947447.1">
    <property type="nucleotide sequence ID" value="NC_002942.5"/>
</dbReference>
<dbReference type="RefSeq" id="YP_095747.1">
    <property type="nucleotide sequence ID" value="NC_002942.5"/>
</dbReference>
<dbReference type="SMR" id="Q5ZUS2"/>
<dbReference type="STRING" id="272624.lpg1720"/>
<dbReference type="PaxDb" id="272624-lpg1720"/>
<dbReference type="GeneID" id="57035709"/>
<dbReference type="KEGG" id="lpn:lpg1720"/>
<dbReference type="PATRIC" id="fig|272624.6.peg.1803"/>
<dbReference type="eggNOG" id="COG2844">
    <property type="taxonomic scope" value="Bacteria"/>
</dbReference>
<dbReference type="HOGENOM" id="CLU_012833_1_0_6"/>
<dbReference type="OrthoDB" id="9758038at2"/>
<dbReference type="Proteomes" id="UP000000609">
    <property type="component" value="Chromosome"/>
</dbReference>
<dbReference type="GO" id="GO:0008773">
    <property type="term" value="F:[protein-PII] uridylyltransferase activity"/>
    <property type="evidence" value="ECO:0007669"/>
    <property type="project" value="UniProtKB-UniRule"/>
</dbReference>
<dbReference type="GO" id="GO:0008081">
    <property type="term" value="F:phosphoric diester hydrolase activity"/>
    <property type="evidence" value="ECO:0007669"/>
    <property type="project" value="UniProtKB-UniRule"/>
</dbReference>
<dbReference type="GO" id="GO:0006808">
    <property type="term" value="P:regulation of nitrogen utilization"/>
    <property type="evidence" value="ECO:0007669"/>
    <property type="project" value="UniProtKB-UniRule"/>
</dbReference>
<dbReference type="CDD" id="cd04899">
    <property type="entry name" value="ACT_ACR-UUR-like_2"/>
    <property type="match status" value="1"/>
</dbReference>
<dbReference type="CDD" id="cd04900">
    <property type="entry name" value="ACT_UUR-like_1"/>
    <property type="match status" value="1"/>
</dbReference>
<dbReference type="CDD" id="cd00077">
    <property type="entry name" value="HDc"/>
    <property type="match status" value="1"/>
</dbReference>
<dbReference type="CDD" id="cd05401">
    <property type="entry name" value="NT_GlnE_GlnD_like"/>
    <property type="match status" value="1"/>
</dbReference>
<dbReference type="Gene3D" id="3.30.460.10">
    <property type="entry name" value="Beta Polymerase, domain 2"/>
    <property type="match status" value="1"/>
</dbReference>
<dbReference type="Gene3D" id="1.10.3210.10">
    <property type="entry name" value="Hypothetical protein af1432"/>
    <property type="match status" value="1"/>
</dbReference>
<dbReference type="HAMAP" id="MF_00277">
    <property type="entry name" value="PII_uridylyl_transf"/>
    <property type="match status" value="1"/>
</dbReference>
<dbReference type="InterPro" id="IPR045865">
    <property type="entry name" value="ACT-like_dom_sf"/>
</dbReference>
<dbReference type="InterPro" id="IPR002912">
    <property type="entry name" value="ACT_dom"/>
</dbReference>
<dbReference type="InterPro" id="IPR005105">
    <property type="entry name" value="GlnD_Uridyltrans_N"/>
</dbReference>
<dbReference type="InterPro" id="IPR003607">
    <property type="entry name" value="HD/PDEase_dom"/>
</dbReference>
<dbReference type="InterPro" id="IPR006674">
    <property type="entry name" value="HD_domain"/>
</dbReference>
<dbReference type="InterPro" id="IPR043519">
    <property type="entry name" value="NT_sf"/>
</dbReference>
<dbReference type="InterPro" id="IPR013546">
    <property type="entry name" value="PII_UdlTrfase/GS_AdlTrfase"/>
</dbReference>
<dbReference type="InterPro" id="IPR010043">
    <property type="entry name" value="UTase/UR"/>
</dbReference>
<dbReference type="NCBIfam" id="TIGR01693">
    <property type="entry name" value="UTase_glnD"/>
    <property type="match status" value="1"/>
</dbReference>
<dbReference type="PANTHER" id="PTHR47320">
    <property type="entry name" value="BIFUNCTIONAL URIDYLYLTRANSFERASE/URIDYLYL-REMOVING ENZYME"/>
    <property type="match status" value="1"/>
</dbReference>
<dbReference type="PANTHER" id="PTHR47320:SF1">
    <property type="entry name" value="BIFUNCTIONAL URIDYLYLTRANSFERASE_URIDYLYL-REMOVING ENZYME"/>
    <property type="match status" value="1"/>
</dbReference>
<dbReference type="Pfam" id="PF03445">
    <property type="entry name" value="DUF294"/>
    <property type="match status" value="1"/>
</dbReference>
<dbReference type="Pfam" id="PF08335">
    <property type="entry name" value="GlnD_UR_UTase"/>
    <property type="match status" value="1"/>
</dbReference>
<dbReference type="Pfam" id="PF01966">
    <property type="entry name" value="HD"/>
    <property type="match status" value="1"/>
</dbReference>
<dbReference type="PIRSF" id="PIRSF006288">
    <property type="entry name" value="PII_uridyltransf"/>
    <property type="match status" value="1"/>
</dbReference>
<dbReference type="SMART" id="SM00471">
    <property type="entry name" value="HDc"/>
    <property type="match status" value="1"/>
</dbReference>
<dbReference type="SUPFAM" id="SSF55021">
    <property type="entry name" value="ACT-like"/>
    <property type="match status" value="1"/>
</dbReference>
<dbReference type="SUPFAM" id="SSF109604">
    <property type="entry name" value="HD-domain/PDEase-like"/>
    <property type="match status" value="1"/>
</dbReference>
<dbReference type="SUPFAM" id="SSF81301">
    <property type="entry name" value="Nucleotidyltransferase"/>
    <property type="match status" value="1"/>
</dbReference>
<dbReference type="SUPFAM" id="SSF81593">
    <property type="entry name" value="Nucleotidyltransferase substrate binding subunit/domain"/>
    <property type="match status" value="1"/>
</dbReference>
<dbReference type="PROSITE" id="PS51671">
    <property type="entry name" value="ACT"/>
    <property type="match status" value="2"/>
</dbReference>
<dbReference type="PROSITE" id="PS51831">
    <property type="entry name" value="HD"/>
    <property type="match status" value="1"/>
</dbReference>
<comment type="function">
    <text evidence="1">Modifies, by uridylylation and deuridylylation, the PII regulatory proteins (GlnB and homologs), in response to the nitrogen status of the cell that GlnD senses through the glutamine level. Under low glutamine levels, catalyzes the conversion of the PII proteins and UTP to PII-UMP and PPi, while under higher glutamine levels, GlnD hydrolyzes PII-UMP to PII and UMP (deuridylylation). Thus, controls uridylylation state and activity of the PII proteins, and plays an important role in the regulation of nitrogen assimilation and metabolism.</text>
</comment>
<comment type="catalytic activity">
    <reaction evidence="1">
        <text>[protein-PII]-L-tyrosine + UTP = [protein-PII]-uridylyl-L-tyrosine + diphosphate</text>
        <dbReference type="Rhea" id="RHEA:13673"/>
        <dbReference type="Rhea" id="RHEA-COMP:12147"/>
        <dbReference type="Rhea" id="RHEA-COMP:12148"/>
        <dbReference type="ChEBI" id="CHEBI:33019"/>
        <dbReference type="ChEBI" id="CHEBI:46398"/>
        <dbReference type="ChEBI" id="CHEBI:46858"/>
        <dbReference type="ChEBI" id="CHEBI:90602"/>
        <dbReference type="EC" id="2.7.7.59"/>
    </reaction>
</comment>
<comment type="catalytic activity">
    <reaction evidence="1">
        <text>[protein-PII]-uridylyl-L-tyrosine + H2O = [protein-PII]-L-tyrosine + UMP + H(+)</text>
        <dbReference type="Rhea" id="RHEA:48600"/>
        <dbReference type="Rhea" id="RHEA-COMP:12147"/>
        <dbReference type="Rhea" id="RHEA-COMP:12148"/>
        <dbReference type="ChEBI" id="CHEBI:15377"/>
        <dbReference type="ChEBI" id="CHEBI:15378"/>
        <dbReference type="ChEBI" id="CHEBI:46858"/>
        <dbReference type="ChEBI" id="CHEBI:57865"/>
        <dbReference type="ChEBI" id="CHEBI:90602"/>
    </reaction>
</comment>
<comment type="cofactor">
    <cofactor evidence="1">
        <name>Mg(2+)</name>
        <dbReference type="ChEBI" id="CHEBI:18420"/>
    </cofactor>
</comment>
<comment type="activity regulation">
    <text evidence="1">Uridylyltransferase (UTase) activity is inhibited by glutamine, while glutamine activates uridylyl-removing (UR) activity.</text>
</comment>
<comment type="domain">
    <text evidence="1">Has four distinct domains: an N-terminal nucleotidyltransferase (NT) domain responsible for UTase activity, a central HD domain that encodes UR activity, and two C-terminal ACT domains that seem to have a role in glutamine sensing.</text>
</comment>
<comment type="similarity">
    <text evidence="1">Belongs to the GlnD family.</text>
</comment>
<organism>
    <name type="scientific">Legionella pneumophila subsp. pneumophila (strain Philadelphia 1 / ATCC 33152 / DSM 7513)</name>
    <dbReference type="NCBI Taxonomy" id="272624"/>
    <lineage>
        <taxon>Bacteria</taxon>
        <taxon>Pseudomonadati</taxon>
        <taxon>Pseudomonadota</taxon>
        <taxon>Gammaproteobacteria</taxon>
        <taxon>Legionellales</taxon>
        <taxon>Legionellaceae</taxon>
        <taxon>Legionella</taxon>
    </lineage>
</organism>
<protein>
    <recommendedName>
        <fullName evidence="1">Bifunctional uridylyltransferase/uridylyl-removing enzyme</fullName>
        <shortName evidence="1">UTase/UR</shortName>
    </recommendedName>
    <alternativeName>
        <fullName evidence="1">Bifunctional [protein-PII] modification enzyme</fullName>
    </alternativeName>
    <alternativeName>
        <fullName evidence="1">Bifunctional nitrogen sensor protein</fullName>
    </alternativeName>
    <domain>
        <recommendedName>
            <fullName evidence="1">[Protein-PII] uridylyltransferase</fullName>
            <shortName evidence="1">PII uridylyltransferase</shortName>
            <shortName evidence="1">UTase</shortName>
            <ecNumber evidence="1">2.7.7.59</ecNumber>
        </recommendedName>
    </domain>
    <domain>
        <recommendedName>
            <fullName evidence="1">[Protein-PII]-UMP uridylyl-removing enzyme</fullName>
            <shortName evidence="1">UR</shortName>
            <ecNumber evidence="1">3.1.4.-</ecNumber>
        </recommendedName>
    </domain>
</protein>
<sequence>MKNDNRIIKNTIKQFKEKLCKDFSQKTNITSITRKLAVFIDTILIQLFIKNKLHFGDNFCLLALGSYGRRELQLHSDIDLLILHTEKVSNIQLQRAQKFIQDCWDVGLEVSHQITTVSSCANLASQDLSVISTIMDMFLLCGHGALMEELIYQTHTLHMWPSHQYFFAKLQEQQNRYAKYGETAYNLEPNIKNGPGGLRDLQILLSISKRHFKIKKLAEGIGYGFITDKEYEELKYCQNFLWRVRFALHMLAGKPEERLSFDYQVKLAQFFGYQDQSHILAIEQFMKDYFKVIKRNRELNEMLLQWFNETIVYHQKQKIIRLDDEFQLSNRFIEVRNNRVFKQNPQSILKLFYWLVKRPDIEGVRASTIRLIRESLFLMGKRFRQSKETANIFINIFRTGNDPYDALQRMNRYGVLAHYLDCFATVTGQMQYDLFHAYTVDQHTLFVIRNISRFKKNEYAKQFPLCAKIITALEKPEILYLGALFHDIAKGRGGDHSELGAIEAQQFTQRHYMEAEDSKLIVWLVRYHLLMSQTAQRKDIYDPKTIEQFCQLLPHARYLDYLYLLTVADICGTNPTLWNAWKDSLLKELYHAAKTRLHKQQELLDEAALISIRKQYAMDILISDGISFRVIQDLWGQFKGKYFLHESPEVIARHTKAILNSKQFPVVIIMPHHSQGGTEVFIYMPHKDERFTITTSVLSNHHVTIQEAAIITCDNQFDLDTYIILDENNQAFLNEQRARDIQKSLCDHLANTGRLPAVSRRRLSRALTHFNVKTQINFIDDNTNHQTQLFLVTNDRPGLLATISRVFLTLNIHLHNAKIATAGERVEDMFYISNQTGYSLNHEEKTILKEKLILEISKSKY</sequence>